<reference key="1">
    <citation type="submission" date="2007-04" db="EMBL/GenBank/DDBJ databases">
        <title>Complete sequence of chromosome of Rhodobacter sphaeroides ATCC 17025.</title>
        <authorList>
            <consortium name="US DOE Joint Genome Institute"/>
            <person name="Copeland A."/>
            <person name="Lucas S."/>
            <person name="Lapidus A."/>
            <person name="Barry K."/>
            <person name="Detter J.C."/>
            <person name="Glavina del Rio T."/>
            <person name="Hammon N."/>
            <person name="Israni S."/>
            <person name="Dalin E."/>
            <person name="Tice H."/>
            <person name="Pitluck S."/>
            <person name="Chertkov O."/>
            <person name="Brettin T."/>
            <person name="Bruce D."/>
            <person name="Han C."/>
            <person name="Schmutz J."/>
            <person name="Larimer F."/>
            <person name="Land M."/>
            <person name="Hauser L."/>
            <person name="Kyrpides N."/>
            <person name="Kim E."/>
            <person name="Richardson P."/>
            <person name="Mackenzie C."/>
            <person name="Choudhary M."/>
            <person name="Donohue T.J."/>
            <person name="Kaplan S."/>
        </authorList>
    </citation>
    <scope>NUCLEOTIDE SEQUENCE [LARGE SCALE GENOMIC DNA]</scope>
    <source>
        <strain>ATCC 17025 / ATH 2.4.3</strain>
    </source>
</reference>
<name>ENO_CERS5</name>
<gene>
    <name evidence="1" type="primary">eno</name>
    <name type="ordered locus">Rsph17025_0930</name>
</gene>
<sequence length="425" mass="45424">MSTIIDIHAREILDSRGNPTVEVDVTLESGAFGRAAVPSGASTGAHEAVEKRDGDTSRYMGKGVLEAVAAVNGEIAEMLVGFDATDQVGIDRTMIEMDGTPNKGRLGANAILGVSLAVAKAAAEFTNQPLFRYVGGASARVLPVPMMNIINGGEHADNPIDIQEFMIMPVAAKNVRDAIRMGSEVFHTLKKELAAGGFNTGIGDEGGFAPNISSTRQALDYILRSIEKAGYKPGEDIYLALDCASTEYFKGGKYEMKGEGKSLTSAENVDYLAALCADYPIISIEDGCAEDDWDGWKLLTDRLGAKVQLVGDDLFVTNPKRLEQGIKAGVGNSMLVKVNQIGSLTETLMAVDMAHRARYTNVMSHRSGETEDSTIADLAVATNCGQIKTGSLSRSDRLAKYNQLIRIEEMLGEVAEYAGRSILKG</sequence>
<evidence type="ECO:0000255" key="1">
    <source>
        <dbReference type="HAMAP-Rule" id="MF_00318"/>
    </source>
</evidence>
<comment type="function">
    <text evidence="1">Catalyzes the reversible conversion of 2-phosphoglycerate (2-PG) into phosphoenolpyruvate (PEP). It is essential for the degradation of carbohydrates via glycolysis.</text>
</comment>
<comment type="catalytic activity">
    <reaction evidence="1">
        <text>(2R)-2-phosphoglycerate = phosphoenolpyruvate + H2O</text>
        <dbReference type="Rhea" id="RHEA:10164"/>
        <dbReference type="ChEBI" id="CHEBI:15377"/>
        <dbReference type="ChEBI" id="CHEBI:58289"/>
        <dbReference type="ChEBI" id="CHEBI:58702"/>
        <dbReference type="EC" id="4.2.1.11"/>
    </reaction>
</comment>
<comment type="cofactor">
    <cofactor evidence="1">
        <name>Mg(2+)</name>
        <dbReference type="ChEBI" id="CHEBI:18420"/>
    </cofactor>
    <text evidence="1">Binds a second Mg(2+) ion via substrate during catalysis.</text>
</comment>
<comment type="pathway">
    <text evidence="1">Carbohydrate degradation; glycolysis; pyruvate from D-glyceraldehyde 3-phosphate: step 4/5.</text>
</comment>
<comment type="subcellular location">
    <subcellularLocation>
        <location evidence="1">Cytoplasm</location>
    </subcellularLocation>
    <subcellularLocation>
        <location evidence="1">Secreted</location>
    </subcellularLocation>
    <subcellularLocation>
        <location evidence="1">Cell surface</location>
    </subcellularLocation>
    <text evidence="1">Fractions of enolase are present in both the cytoplasm and on the cell surface.</text>
</comment>
<comment type="similarity">
    <text evidence="1">Belongs to the enolase family.</text>
</comment>
<feature type="chain" id="PRO_1000019242" description="Enolase">
    <location>
        <begin position="1"/>
        <end position="425"/>
    </location>
</feature>
<feature type="active site" description="Proton donor" evidence="1">
    <location>
        <position position="205"/>
    </location>
</feature>
<feature type="active site" description="Proton acceptor" evidence="1">
    <location>
        <position position="337"/>
    </location>
</feature>
<feature type="binding site" evidence="1">
    <location>
        <position position="163"/>
    </location>
    <ligand>
        <name>(2R)-2-phosphoglycerate</name>
        <dbReference type="ChEBI" id="CHEBI:58289"/>
    </ligand>
</feature>
<feature type="binding site" evidence="1">
    <location>
        <position position="242"/>
    </location>
    <ligand>
        <name>Mg(2+)</name>
        <dbReference type="ChEBI" id="CHEBI:18420"/>
    </ligand>
</feature>
<feature type="binding site" evidence="1">
    <location>
        <position position="285"/>
    </location>
    <ligand>
        <name>Mg(2+)</name>
        <dbReference type="ChEBI" id="CHEBI:18420"/>
    </ligand>
</feature>
<feature type="binding site" evidence="1">
    <location>
        <position position="312"/>
    </location>
    <ligand>
        <name>Mg(2+)</name>
        <dbReference type="ChEBI" id="CHEBI:18420"/>
    </ligand>
</feature>
<feature type="binding site" evidence="1">
    <location>
        <position position="337"/>
    </location>
    <ligand>
        <name>(2R)-2-phosphoglycerate</name>
        <dbReference type="ChEBI" id="CHEBI:58289"/>
    </ligand>
</feature>
<feature type="binding site" evidence="1">
    <location>
        <position position="366"/>
    </location>
    <ligand>
        <name>(2R)-2-phosphoglycerate</name>
        <dbReference type="ChEBI" id="CHEBI:58289"/>
    </ligand>
</feature>
<feature type="binding site" evidence="1">
    <location>
        <position position="367"/>
    </location>
    <ligand>
        <name>(2R)-2-phosphoglycerate</name>
        <dbReference type="ChEBI" id="CHEBI:58289"/>
    </ligand>
</feature>
<feature type="binding site" evidence="1">
    <location>
        <position position="388"/>
    </location>
    <ligand>
        <name>(2R)-2-phosphoglycerate</name>
        <dbReference type="ChEBI" id="CHEBI:58289"/>
    </ligand>
</feature>
<proteinExistence type="inferred from homology"/>
<protein>
    <recommendedName>
        <fullName evidence="1">Enolase</fullName>
        <ecNumber evidence="1">4.2.1.11</ecNumber>
    </recommendedName>
    <alternativeName>
        <fullName evidence="1">2-phospho-D-glycerate hydro-lyase</fullName>
    </alternativeName>
    <alternativeName>
        <fullName evidence="1">2-phosphoglycerate dehydratase</fullName>
    </alternativeName>
</protein>
<organism>
    <name type="scientific">Cereibacter sphaeroides (strain ATCC 17025 / ATH 2.4.3)</name>
    <name type="common">Rhodobacter sphaeroides</name>
    <dbReference type="NCBI Taxonomy" id="349102"/>
    <lineage>
        <taxon>Bacteria</taxon>
        <taxon>Pseudomonadati</taxon>
        <taxon>Pseudomonadota</taxon>
        <taxon>Alphaproteobacteria</taxon>
        <taxon>Rhodobacterales</taxon>
        <taxon>Paracoccaceae</taxon>
        <taxon>Cereibacter</taxon>
    </lineage>
</organism>
<keyword id="KW-0963">Cytoplasm</keyword>
<keyword id="KW-0324">Glycolysis</keyword>
<keyword id="KW-0456">Lyase</keyword>
<keyword id="KW-0460">Magnesium</keyword>
<keyword id="KW-0479">Metal-binding</keyword>
<keyword id="KW-0964">Secreted</keyword>
<dbReference type="EC" id="4.2.1.11" evidence="1"/>
<dbReference type="EMBL" id="CP000661">
    <property type="protein sequence ID" value="ABP69832.1"/>
    <property type="molecule type" value="Genomic_DNA"/>
</dbReference>
<dbReference type="SMR" id="A4WR18"/>
<dbReference type="STRING" id="349102.Rsph17025_0930"/>
<dbReference type="KEGG" id="rsq:Rsph17025_0930"/>
<dbReference type="eggNOG" id="COG0148">
    <property type="taxonomic scope" value="Bacteria"/>
</dbReference>
<dbReference type="HOGENOM" id="CLU_031223_2_1_5"/>
<dbReference type="BioCyc" id="RSPH349102:G1G8M-954-MONOMER"/>
<dbReference type="UniPathway" id="UPA00109">
    <property type="reaction ID" value="UER00187"/>
</dbReference>
<dbReference type="GO" id="GO:0009986">
    <property type="term" value="C:cell surface"/>
    <property type="evidence" value="ECO:0007669"/>
    <property type="project" value="UniProtKB-SubCell"/>
</dbReference>
<dbReference type="GO" id="GO:0005576">
    <property type="term" value="C:extracellular region"/>
    <property type="evidence" value="ECO:0007669"/>
    <property type="project" value="UniProtKB-SubCell"/>
</dbReference>
<dbReference type="GO" id="GO:0000015">
    <property type="term" value="C:phosphopyruvate hydratase complex"/>
    <property type="evidence" value="ECO:0007669"/>
    <property type="project" value="InterPro"/>
</dbReference>
<dbReference type="GO" id="GO:0000287">
    <property type="term" value="F:magnesium ion binding"/>
    <property type="evidence" value="ECO:0007669"/>
    <property type="project" value="UniProtKB-UniRule"/>
</dbReference>
<dbReference type="GO" id="GO:0004634">
    <property type="term" value="F:phosphopyruvate hydratase activity"/>
    <property type="evidence" value="ECO:0007669"/>
    <property type="project" value="UniProtKB-UniRule"/>
</dbReference>
<dbReference type="GO" id="GO:0006096">
    <property type="term" value="P:glycolytic process"/>
    <property type="evidence" value="ECO:0007669"/>
    <property type="project" value="UniProtKB-UniRule"/>
</dbReference>
<dbReference type="CDD" id="cd03313">
    <property type="entry name" value="enolase"/>
    <property type="match status" value="1"/>
</dbReference>
<dbReference type="FunFam" id="3.20.20.120:FF:000001">
    <property type="entry name" value="Enolase"/>
    <property type="match status" value="1"/>
</dbReference>
<dbReference type="FunFam" id="3.30.390.10:FF:000001">
    <property type="entry name" value="Enolase"/>
    <property type="match status" value="1"/>
</dbReference>
<dbReference type="Gene3D" id="3.20.20.120">
    <property type="entry name" value="Enolase-like C-terminal domain"/>
    <property type="match status" value="1"/>
</dbReference>
<dbReference type="Gene3D" id="3.30.390.10">
    <property type="entry name" value="Enolase-like, N-terminal domain"/>
    <property type="match status" value="1"/>
</dbReference>
<dbReference type="HAMAP" id="MF_00318">
    <property type="entry name" value="Enolase"/>
    <property type="match status" value="1"/>
</dbReference>
<dbReference type="InterPro" id="IPR000941">
    <property type="entry name" value="Enolase"/>
</dbReference>
<dbReference type="InterPro" id="IPR036849">
    <property type="entry name" value="Enolase-like_C_sf"/>
</dbReference>
<dbReference type="InterPro" id="IPR029017">
    <property type="entry name" value="Enolase-like_N"/>
</dbReference>
<dbReference type="InterPro" id="IPR020810">
    <property type="entry name" value="Enolase_C"/>
</dbReference>
<dbReference type="InterPro" id="IPR020809">
    <property type="entry name" value="Enolase_CS"/>
</dbReference>
<dbReference type="InterPro" id="IPR020811">
    <property type="entry name" value="Enolase_N"/>
</dbReference>
<dbReference type="NCBIfam" id="TIGR01060">
    <property type="entry name" value="eno"/>
    <property type="match status" value="1"/>
</dbReference>
<dbReference type="PANTHER" id="PTHR11902">
    <property type="entry name" value="ENOLASE"/>
    <property type="match status" value="1"/>
</dbReference>
<dbReference type="PANTHER" id="PTHR11902:SF1">
    <property type="entry name" value="ENOLASE"/>
    <property type="match status" value="1"/>
</dbReference>
<dbReference type="Pfam" id="PF00113">
    <property type="entry name" value="Enolase_C"/>
    <property type="match status" value="1"/>
</dbReference>
<dbReference type="Pfam" id="PF03952">
    <property type="entry name" value="Enolase_N"/>
    <property type="match status" value="1"/>
</dbReference>
<dbReference type="PIRSF" id="PIRSF001400">
    <property type="entry name" value="Enolase"/>
    <property type="match status" value="1"/>
</dbReference>
<dbReference type="PRINTS" id="PR00148">
    <property type="entry name" value="ENOLASE"/>
</dbReference>
<dbReference type="SFLD" id="SFLDS00001">
    <property type="entry name" value="Enolase"/>
    <property type="match status" value="1"/>
</dbReference>
<dbReference type="SFLD" id="SFLDF00002">
    <property type="entry name" value="enolase"/>
    <property type="match status" value="1"/>
</dbReference>
<dbReference type="SMART" id="SM01192">
    <property type="entry name" value="Enolase_C"/>
    <property type="match status" value="1"/>
</dbReference>
<dbReference type="SMART" id="SM01193">
    <property type="entry name" value="Enolase_N"/>
    <property type="match status" value="1"/>
</dbReference>
<dbReference type="SUPFAM" id="SSF51604">
    <property type="entry name" value="Enolase C-terminal domain-like"/>
    <property type="match status" value="1"/>
</dbReference>
<dbReference type="SUPFAM" id="SSF54826">
    <property type="entry name" value="Enolase N-terminal domain-like"/>
    <property type="match status" value="1"/>
</dbReference>
<dbReference type="PROSITE" id="PS00164">
    <property type="entry name" value="ENOLASE"/>
    <property type="match status" value="1"/>
</dbReference>
<accession>A4WR18</accession>